<evidence type="ECO:0000255" key="1"/>
<evidence type="ECO:0000256" key="2">
    <source>
        <dbReference type="SAM" id="MobiDB-lite"/>
    </source>
</evidence>
<evidence type="ECO:0000269" key="3">
    <source>
    </source>
</evidence>
<evidence type="ECO:0000269" key="4">
    <source>
    </source>
</evidence>
<evidence type="ECO:0000269" key="5">
    <source>
    </source>
</evidence>
<evidence type="ECO:0000269" key="6">
    <source>
    </source>
</evidence>
<evidence type="ECO:0000269" key="7">
    <source>
    </source>
</evidence>
<evidence type="ECO:0000303" key="8">
    <source>
    </source>
</evidence>
<evidence type="ECO:0000305" key="9"/>
<evidence type="ECO:0000312" key="10">
    <source>
        <dbReference type="EMBL" id="AAF48111.2"/>
    </source>
</evidence>
<organism evidence="10">
    <name type="scientific">Drosophila melanogaster</name>
    <name type="common">Fruit fly</name>
    <dbReference type="NCBI Taxonomy" id="7227"/>
    <lineage>
        <taxon>Eukaryota</taxon>
        <taxon>Metazoa</taxon>
        <taxon>Ecdysozoa</taxon>
        <taxon>Arthropoda</taxon>
        <taxon>Hexapoda</taxon>
        <taxon>Insecta</taxon>
        <taxon>Pterygota</taxon>
        <taxon>Neoptera</taxon>
        <taxon>Endopterygota</taxon>
        <taxon>Diptera</taxon>
        <taxon>Brachycera</taxon>
        <taxon>Muscomorpha</taxon>
        <taxon>Ephydroidea</taxon>
        <taxon>Drosophilidae</taxon>
        <taxon>Drosophila</taxon>
        <taxon>Sophophora</taxon>
    </lineage>
</organism>
<sequence length="110" mass="11574">MVYIDHNGRVWEKRPWDWRRIVELFVGIWFAIKQLFLTFLAPFTGNNNQANPRRGNGWGGGGGWGGGGGGGGGGGGGRPGSGSGGLRPNRRIGRIQPTMSCNMPAGGGUG</sequence>
<proteinExistence type="evidence at transcript level"/>
<feature type="chain" id="PRO_0000097666" description="Glycine-rich selenoprotein">
    <location>
        <begin position="1"/>
        <end position="110"/>
    </location>
</feature>
<feature type="topological domain" description="Lumenal" evidence="1">
    <location>
        <begin position="1"/>
        <end position="20"/>
    </location>
</feature>
<feature type="transmembrane region" description="Helical; Signal-anchor for type III membrane protein" evidence="1">
    <location>
        <begin position="21"/>
        <end position="41"/>
    </location>
</feature>
<feature type="topological domain" description="Cytoplasmic" evidence="1">
    <location>
        <begin position="42"/>
        <end position="110"/>
    </location>
</feature>
<feature type="region of interest" description="Disordered" evidence="2">
    <location>
        <begin position="51"/>
        <end position="110"/>
    </location>
</feature>
<feature type="compositionally biased region" description="Gly residues" evidence="2">
    <location>
        <begin position="56"/>
        <end position="85"/>
    </location>
</feature>
<feature type="non-standard amino acid" description="Selenocysteine" evidence="4">
    <location>
        <position position="109"/>
    </location>
</feature>
<comment type="function">
    <text evidence="4 8">Plays a role in the life span. May be involved in regulating the redox state of the cell and possesses anticarcinogenic properties.</text>
</comment>
<comment type="subcellular location">
    <subcellularLocation>
        <location evidence="7">Golgi apparatus membrane</location>
        <topology evidence="7">Single-pass type III membrane protein</topology>
    </subcellularLocation>
</comment>
<comment type="developmental stage">
    <text evidence="4 5">Expressed in larvae and adults but strongest expression is found in embryos, within syncytial blastoderm, cellular blastoderm and gastrulation stages.</text>
</comment>
<comment type="sequence caution" evidence="9">
    <conflict type="erroneous termination">
        <sequence resource="EMBL-CDS" id="AAL28159"/>
    </conflict>
    <text>Truncated C-terminus.</text>
</comment>
<accession>Q7Z2C4</accession>
<accession>Q2V8Y4</accession>
<accession>Q962X6</accession>
<accession>Q9VYS7</accession>
<dbReference type="EMBL" id="AF396454">
    <property type="protein sequence ID" value="AAK72981.1"/>
    <property type="molecule type" value="mRNA"/>
</dbReference>
<dbReference type="EMBL" id="DQ285021">
    <property type="protein sequence ID" value="ABB90104.1"/>
    <property type="molecule type" value="mRNA"/>
</dbReference>
<dbReference type="EMBL" id="AE014298">
    <property type="protein sequence ID" value="AAF48111.2"/>
    <property type="molecule type" value="Genomic_DNA"/>
</dbReference>
<dbReference type="EMBL" id="AY060611">
    <property type="protein sequence ID" value="AAL28159.1"/>
    <property type="status" value="ALT_SEQ"/>
    <property type="molecule type" value="mRNA"/>
</dbReference>
<dbReference type="RefSeq" id="NP_572763.3">
    <property type="nucleotide sequence ID" value="NM_132535.3"/>
</dbReference>
<dbReference type="BioGRID" id="58554">
    <property type="interactions" value="14"/>
</dbReference>
<dbReference type="FunCoup" id="Q7Z2C4">
    <property type="interactions" value="418"/>
</dbReference>
<dbReference type="STRING" id="7227.FBpp0073414"/>
<dbReference type="PaxDb" id="7227-FBpp0073414"/>
<dbReference type="DNASU" id="32149"/>
<dbReference type="EnsemblMetazoa" id="FBtr0073570">
    <property type="protein sequence ID" value="FBpp0073414"/>
    <property type="gene ID" value="FBgn0030350"/>
</dbReference>
<dbReference type="GeneID" id="32149"/>
<dbReference type="KEGG" id="dme:Dmel_CG1844"/>
<dbReference type="AGR" id="FB:FBgn0030350"/>
<dbReference type="CTD" id="32149"/>
<dbReference type="FlyBase" id="FBgn0030350">
    <property type="gene designation" value="SelG"/>
</dbReference>
<dbReference type="VEuPathDB" id="VectorBase:FBgn0030350"/>
<dbReference type="eggNOG" id="ENOG502S803">
    <property type="taxonomic scope" value="Eukaryota"/>
</dbReference>
<dbReference type="GeneTree" id="ENSGT00940000176559"/>
<dbReference type="HOGENOM" id="CLU_179538_0_0_1"/>
<dbReference type="InParanoid" id="Q7Z2C4"/>
<dbReference type="OMA" id="SCNMPAG"/>
<dbReference type="OrthoDB" id="167295at2759"/>
<dbReference type="PhylomeDB" id="Q7Z2C4"/>
<dbReference type="BioGRID-ORCS" id="32149">
    <property type="hits" value="0 hits in 1 CRISPR screen"/>
</dbReference>
<dbReference type="ChiTaRS" id="SelG">
    <property type="organism name" value="fly"/>
</dbReference>
<dbReference type="GenomeRNAi" id="32149"/>
<dbReference type="PRO" id="PR:Q7Z2C4"/>
<dbReference type="Proteomes" id="UP000000803">
    <property type="component" value="Chromosome X"/>
</dbReference>
<dbReference type="Bgee" id="FBgn0030350">
    <property type="expression patterns" value="Expressed in spermathecum and 178 other cell types or tissues"/>
</dbReference>
<dbReference type="ExpressionAtlas" id="Q7Z2C4">
    <property type="expression patterns" value="baseline and differential"/>
</dbReference>
<dbReference type="GO" id="GO:0005789">
    <property type="term" value="C:endoplasmic reticulum membrane"/>
    <property type="evidence" value="ECO:0000318"/>
    <property type="project" value="GO_Central"/>
</dbReference>
<dbReference type="GO" id="GO:0005794">
    <property type="term" value="C:Golgi apparatus"/>
    <property type="evidence" value="ECO:0000314"/>
    <property type="project" value="FlyBase"/>
</dbReference>
<dbReference type="GO" id="GO:0000139">
    <property type="term" value="C:Golgi membrane"/>
    <property type="evidence" value="ECO:0007669"/>
    <property type="project" value="UniProtKB-SubCell"/>
</dbReference>
<dbReference type="GO" id="GO:0043231">
    <property type="term" value="C:intracellular membrane-bounded organelle"/>
    <property type="evidence" value="ECO:0000314"/>
    <property type="project" value="FlyBase"/>
</dbReference>
<dbReference type="GO" id="GO:0007350">
    <property type="term" value="P:blastoderm segmentation"/>
    <property type="evidence" value="ECO:0000314"/>
    <property type="project" value="FlyBase"/>
</dbReference>
<dbReference type="GO" id="GO:0006816">
    <property type="term" value="P:calcium ion transport"/>
    <property type="evidence" value="ECO:0000318"/>
    <property type="project" value="GO_Central"/>
</dbReference>
<dbReference type="GO" id="GO:0045454">
    <property type="term" value="P:cell redox homeostasis"/>
    <property type="evidence" value="ECO:0000304"/>
    <property type="project" value="UniProtKB"/>
</dbReference>
<dbReference type="GO" id="GO:0008340">
    <property type="term" value="P:determination of adult lifespan"/>
    <property type="evidence" value="ECO:0000314"/>
    <property type="project" value="UniProtKB"/>
</dbReference>
<dbReference type="GO" id="GO:0009792">
    <property type="term" value="P:embryo development ending in birth or egg hatching"/>
    <property type="evidence" value="ECO:0000314"/>
    <property type="project" value="UniProtKB"/>
</dbReference>
<dbReference type="GO" id="GO:0001700">
    <property type="term" value="P:embryonic development via the syncytial blastoderm"/>
    <property type="evidence" value="ECO:0000314"/>
    <property type="project" value="FlyBase"/>
</dbReference>
<dbReference type="GO" id="GO:0032469">
    <property type="term" value="P:endoplasmic reticulum calcium ion homeostasis"/>
    <property type="evidence" value="ECO:0000315"/>
    <property type="project" value="FlyBase"/>
</dbReference>
<dbReference type="GO" id="GO:0010470">
    <property type="term" value="P:regulation of gastrulation"/>
    <property type="evidence" value="ECO:0000314"/>
    <property type="project" value="FlyBase"/>
</dbReference>
<dbReference type="InterPro" id="IPR024491">
    <property type="entry name" value="Se_SelK/SelG"/>
</dbReference>
<dbReference type="PANTHER" id="PTHR16875">
    <property type="entry name" value="SELENOPROTEIN K"/>
    <property type="match status" value="1"/>
</dbReference>
<dbReference type="PANTHER" id="PTHR16875:SF0">
    <property type="entry name" value="SELENOPROTEIN K"/>
    <property type="match status" value="1"/>
</dbReference>
<dbReference type="Pfam" id="PF10961">
    <property type="entry name" value="SelK_SelG"/>
    <property type="match status" value="1"/>
</dbReference>
<reference evidence="9" key="1">
    <citation type="journal article" date="2001" name="J. Biol. Chem.">
        <title>Selenium metabolism in Drosophila: selenoproteins, selenoprotein mRNA expression, fertility, and mortality.</title>
        <authorList>
            <person name="Martin-Romero F.J."/>
            <person name="Kryukov G.V."/>
            <person name="Lobanov A.V."/>
            <person name="Carlson B.A."/>
            <person name="Lee B.J."/>
            <person name="Gladyshev V.N."/>
            <person name="Hatfield D.L."/>
        </authorList>
    </citation>
    <scope>NUCLEOTIDE SEQUENCE [MRNA]</scope>
    <scope>FUNCTION</scope>
    <scope>DEVELOPMENTAL STAGE</scope>
    <source>
        <strain evidence="4">Canton-S</strain>
        <tissue evidence="4">Embryo</tissue>
        <tissue evidence="4">Larva</tissue>
    </source>
</reference>
<reference key="2">
    <citation type="journal article" date="2006" name="Biochem. Biophys. Res. Commun.">
        <title>G-rich, a Drosophila selenoprotein, is a Golgi-resident type III membrane protein.</title>
        <authorList>
            <person name="Chen C.L."/>
            <person name="Shim M.S."/>
            <person name="Chung J."/>
            <person name="Yoo H.-S."/>
            <person name="Ha J.M."/>
            <person name="Kim J.Y."/>
            <person name="Choi J."/>
            <person name="Zang S.L."/>
            <person name="Hou X."/>
            <person name="Carlson B.A."/>
            <person name="Hatfield D.L."/>
            <person name="Lee B.J."/>
        </authorList>
    </citation>
    <scope>NUCLEOTIDE SEQUENCE [MRNA]</scope>
    <scope>SUBCELLULAR LOCATION</scope>
</reference>
<reference evidence="10" key="3">
    <citation type="journal article" date="2000" name="Science">
        <title>The genome sequence of Drosophila melanogaster.</title>
        <authorList>
            <person name="Adams M.D."/>
            <person name="Celniker S.E."/>
            <person name="Holt R.A."/>
            <person name="Evans C.A."/>
            <person name="Gocayne J.D."/>
            <person name="Amanatides P.G."/>
            <person name="Scherer S.E."/>
            <person name="Li P.W."/>
            <person name="Hoskins R.A."/>
            <person name="Galle R.F."/>
            <person name="George R.A."/>
            <person name="Lewis S.E."/>
            <person name="Richards S."/>
            <person name="Ashburner M."/>
            <person name="Henderson S.N."/>
            <person name="Sutton G.G."/>
            <person name="Wortman J.R."/>
            <person name="Yandell M.D."/>
            <person name="Zhang Q."/>
            <person name="Chen L.X."/>
            <person name="Brandon R.C."/>
            <person name="Rogers Y.-H.C."/>
            <person name="Blazej R.G."/>
            <person name="Champe M."/>
            <person name="Pfeiffer B.D."/>
            <person name="Wan K.H."/>
            <person name="Doyle C."/>
            <person name="Baxter E.G."/>
            <person name="Helt G."/>
            <person name="Nelson C.R."/>
            <person name="Miklos G.L.G."/>
            <person name="Abril J.F."/>
            <person name="Agbayani A."/>
            <person name="An H.-J."/>
            <person name="Andrews-Pfannkoch C."/>
            <person name="Baldwin D."/>
            <person name="Ballew R.M."/>
            <person name="Basu A."/>
            <person name="Baxendale J."/>
            <person name="Bayraktaroglu L."/>
            <person name="Beasley E.M."/>
            <person name="Beeson K.Y."/>
            <person name="Benos P.V."/>
            <person name="Berman B.P."/>
            <person name="Bhandari D."/>
            <person name="Bolshakov S."/>
            <person name="Borkova D."/>
            <person name="Botchan M.R."/>
            <person name="Bouck J."/>
            <person name="Brokstein P."/>
            <person name="Brottier P."/>
            <person name="Burtis K.C."/>
            <person name="Busam D.A."/>
            <person name="Butler H."/>
            <person name="Cadieu E."/>
            <person name="Center A."/>
            <person name="Chandra I."/>
            <person name="Cherry J.M."/>
            <person name="Cawley S."/>
            <person name="Dahlke C."/>
            <person name="Davenport L.B."/>
            <person name="Davies P."/>
            <person name="de Pablos B."/>
            <person name="Delcher A."/>
            <person name="Deng Z."/>
            <person name="Mays A.D."/>
            <person name="Dew I."/>
            <person name="Dietz S.M."/>
            <person name="Dodson K."/>
            <person name="Doup L.E."/>
            <person name="Downes M."/>
            <person name="Dugan-Rocha S."/>
            <person name="Dunkov B.C."/>
            <person name="Dunn P."/>
            <person name="Durbin K.J."/>
            <person name="Evangelista C.C."/>
            <person name="Ferraz C."/>
            <person name="Ferriera S."/>
            <person name="Fleischmann W."/>
            <person name="Fosler C."/>
            <person name="Gabrielian A.E."/>
            <person name="Garg N.S."/>
            <person name="Gelbart W.M."/>
            <person name="Glasser K."/>
            <person name="Glodek A."/>
            <person name="Gong F."/>
            <person name="Gorrell J.H."/>
            <person name="Gu Z."/>
            <person name="Guan P."/>
            <person name="Harris M."/>
            <person name="Harris N.L."/>
            <person name="Harvey D.A."/>
            <person name="Heiman T.J."/>
            <person name="Hernandez J.R."/>
            <person name="Houck J."/>
            <person name="Hostin D."/>
            <person name="Houston K.A."/>
            <person name="Howland T.J."/>
            <person name="Wei M.-H."/>
            <person name="Ibegwam C."/>
            <person name="Jalali M."/>
            <person name="Kalush F."/>
            <person name="Karpen G.H."/>
            <person name="Ke Z."/>
            <person name="Kennison J.A."/>
            <person name="Ketchum K.A."/>
            <person name="Kimmel B.E."/>
            <person name="Kodira C.D."/>
            <person name="Kraft C.L."/>
            <person name="Kravitz S."/>
            <person name="Kulp D."/>
            <person name="Lai Z."/>
            <person name="Lasko P."/>
            <person name="Lei Y."/>
            <person name="Levitsky A.A."/>
            <person name="Li J.H."/>
            <person name="Li Z."/>
            <person name="Liang Y."/>
            <person name="Lin X."/>
            <person name="Liu X."/>
            <person name="Mattei B."/>
            <person name="McIntosh T.C."/>
            <person name="McLeod M.P."/>
            <person name="McPherson D."/>
            <person name="Merkulov G."/>
            <person name="Milshina N.V."/>
            <person name="Mobarry C."/>
            <person name="Morris J."/>
            <person name="Moshrefi A."/>
            <person name="Mount S.M."/>
            <person name="Moy M."/>
            <person name="Murphy B."/>
            <person name="Murphy L."/>
            <person name="Muzny D.M."/>
            <person name="Nelson D.L."/>
            <person name="Nelson D.R."/>
            <person name="Nelson K.A."/>
            <person name="Nixon K."/>
            <person name="Nusskern D.R."/>
            <person name="Pacleb J.M."/>
            <person name="Palazzolo M."/>
            <person name="Pittman G.S."/>
            <person name="Pan S."/>
            <person name="Pollard J."/>
            <person name="Puri V."/>
            <person name="Reese M.G."/>
            <person name="Reinert K."/>
            <person name="Remington K."/>
            <person name="Saunders R.D.C."/>
            <person name="Scheeler F."/>
            <person name="Shen H."/>
            <person name="Shue B.C."/>
            <person name="Siden-Kiamos I."/>
            <person name="Simpson M."/>
            <person name="Skupski M.P."/>
            <person name="Smith T.J."/>
            <person name="Spier E."/>
            <person name="Spradling A.C."/>
            <person name="Stapleton M."/>
            <person name="Strong R."/>
            <person name="Sun E."/>
            <person name="Svirskas R."/>
            <person name="Tector C."/>
            <person name="Turner R."/>
            <person name="Venter E."/>
            <person name="Wang A.H."/>
            <person name="Wang X."/>
            <person name="Wang Z.-Y."/>
            <person name="Wassarman D.A."/>
            <person name="Weinstock G.M."/>
            <person name="Weissenbach J."/>
            <person name="Williams S.M."/>
            <person name="Woodage T."/>
            <person name="Worley K.C."/>
            <person name="Wu D."/>
            <person name="Yang S."/>
            <person name="Yao Q.A."/>
            <person name="Ye J."/>
            <person name="Yeh R.-F."/>
            <person name="Zaveri J.S."/>
            <person name="Zhan M."/>
            <person name="Zhang G."/>
            <person name="Zhao Q."/>
            <person name="Zheng L."/>
            <person name="Zheng X.H."/>
            <person name="Zhong F.N."/>
            <person name="Zhong W."/>
            <person name="Zhou X."/>
            <person name="Zhu S.C."/>
            <person name="Zhu X."/>
            <person name="Smith H.O."/>
            <person name="Gibbs R.A."/>
            <person name="Myers E.W."/>
            <person name="Rubin G.M."/>
            <person name="Venter J.C."/>
        </authorList>
    </citation>
    <scope>NUCLEOTIDE SEQUENCE [LARGE SCALE GENOMIC DNA]</scope>
    <source>
        <strain evidence="3">Berkeley</strain>
    </source>
</reference>
<reference evidence="9" key="4">
    <citation type="journal article" date="2002" name="Genome Biol.">
        <title>Annotation of the Drosophila melanogaster euchromatic genome: a systematic review.</title>
        <authorList>
            <person name="Misra S."/>
            <person name="Crosby M.A."/>
            <person name="Mungall C.J."/>
            <person name="Matthews B.B."/>
            <person name="Campbell K.S."/>
            <person name="Hradecky P."/>
            <person name="Huang Y."/>
            <person name="Kaminker J.S."/>
            <person name="Millburn G.H."/>
            <person name="Prochnik S.E."/>
            <person name="Smith C.D."/>
            <person name="Tupy J.L."/>
            <person name="Whitfield E.J."/>
            <person name="Bayraktaroglu L."/>
            <person name="Berman B.P."/>
            <person name="Bettencourt B.R."/>
            <person name="Celniker S.E."/>
            <person name="de Grey A.D.N.J."/>
            <person name="Drysdale R.A."/>
            <person name="Harris N.L."/>
            <person name="Richter J."/>
            <person name="Russo S."/>
            <person name="Schroeder A.J."/>
            <person name="Shu S.Q."/>
            <person name="Stapleton M."/>
            <person name="Yamada C."/>
            <person name="Ashburner M."/>
            <person name="Gelbart W.M."/>
            <person name="Rubin G.M."/>
            <person name="Lewis S.E."/>
        </authorList>
    </citation>
    <scope>GENOME REANNOTATION</scope>
    <source>
        <strain>Berkeley</strain>
    </source>
</reference>
<reference evidence="9" key="5">
    <citation type="journal article" date="2002" name="Genome Biol.">
        <title>A Drosophila full-length cDNA resource.</title>
        <authorList>
            <person name="Stapleton M."/>
            <person name="Carlson J.W."/>
            <person name="Brokstein P."/>
            <person name="Yu C."/>
            <person name="Champe M."/>
            <person name="George R.A."/>
            <person name="Guarin H."/>
            <person name="Kronmiller B."/>
            <person name="Pacleb J.M."/>
            <person name="Park S."/>
            <person name="Wan K.H."/>
            <person name="Rubin G.M."/>
            <person name="Celniker S.E."/>
        </authorList>
    </citation>
    <scope>NUCLEOTIDE SEQUENCE [LARGE SCALE MRNA]</scope>
    <source>
        <strain evidence="6">Berkeley</strain>
        <tissue evidence="6">Embryo</tissue>
    </source>
</reference>
<reference evidence="9" key="6">
    <citation type="journal article" date="2001" name="EMBO Rep.">
        <title>In silico identification of novel selenoproteins in the Drosophila melanogaster genome.</title>
        <authorList>
            <person name="Castellano S."/>
            <person name="Morozova N."/>
            <person name="Morey M."/>
            <person name="Berry M.J."/>
            <person name="Serras F."/>
            <person name="Corominas M."/>
            <person name="Guigo R."/>
        </authorList>
    </citation>
    <scope>FUNCTION</scope>
    <scope>DEVELOPMENTAL STAGE</scope>
</reference>
<keyword id="KW-0217">Developmental protein</keyword>
<keyword id="KW-0333">Golgi apparatus</keyword>
<keyword id="KW-0472">Membrane</keyword>
<keyword id="KW-1185">Reference proteome</keyword>
<keyword id="KW-0712">Selenocysteine</keyword>
<keyword id="KW-0735">Signal-anchor</keyword>
<keyword id="KW-0812">Transmembrane</keyword>
<keyword id="KW-1133">Transmembrane helix</keyword>
<protein>
    <recommendedName>
        <fullName>Glycine-rich selenoprotein</fullName>
        <shortName>G-rich selenoprotein</shortName>
    </recommendedName>
    <alternativeName>
        <fullName>dSelG</fullName>
    </alternativeName>
</protein>
<gene>
    <name type="primary">SelG</name>
    <name type="synonym">G-rich</name>
    <name type="ORF">CG1844</name>
</gene>
<name>SELG_DROME</name>